<protein>
    <recommendedName>
        <fullName evidence="1">1,4-alpha-glucan branching enzyme GlgB</fullName>
        <ecNumber evidence="1">2.4.1.18</ecNumber>
    </recommendedName>
    <alternativeName>
        <fullName evidence="1">1,4-alpha-D-glucan:1,4-alpha-D-glucan 6-glucosyl-transferase</fullName>
    </alternativeName>
    <alternativeName>
        <fullName evidence="1">Alpha-(1-&gt;4)-glucan branching enzyme</fullName>
    </alternativeName>
    <alternativeName>
        <fullName evidence="1">Glycogen branching enzyme</fullName>
        <shortName evidence="1">BE</shortName>
    </alternativeName>
</protein>
<comment type="function">
    <text evidence="1">Catalyzes the formation of the alpha-1,6-glucosidic linkages in glycogen by scission of a 1,4-alpha-linked oligosaccharide from growing alpha-1,4-glucan chains and the subsequent attachment of the oligosaccharide to the alpha-1,6 position.</text>
</comment>
<comment type="catalytic activity">
    <reaction evidence="1">
        <text>Transfers a segment of a (1-&gt;4)-alpha-D-glucan chain to a primary hydroxy group in a similar glucan chain.</text>
        <dbReference type="EC" id="2.4.1.18"/>
    </reaction>
</comment>
<comment type="pathway">
    <text evidence="1">Glycan biosynthesis; glycogen biosynthesis.</text>
</comment>
<comment type="subunit">
    <text evidence="1">Monomer.</text>
</comment>
<comment type="similarity">
    <text evidence="1">Belongs to the glycosyl hydrolase 13 family. GlgB subfamily.</text>
</comment>
<evidence type="ECO:0000255" key="1">
    <source>
        <dbReference type="HAMAP-Rule" id="MF_00685"/>
    </source>
</evidence>
<gene>
    <name evidence="1" type="primary">glgB</name>
    <name type="ordered locus">Fphi_0328</name>
</gene>
<proteinExistence type="inferred from homology"/>
<dbReference type="EC" id="2.4.1.18" evidence="1"/>
<dbReference type="EMBL" id="CP000937">
    <property type="protein sequence ID" value="ABZ86544.1"/>
    <property type="molecule type" value="Genomic_DNA"/>
</dbReference>
<dbReference type="SMR" id="B0TZI5"/>
<dbReference type="CAZy" id="CBM48">
    <property type="family name" value="Carbohydrate-Binding Module Family 48"/>
</dbReference>
<dbReference type="CAZy" id="GH13">
    <property type="family name" value="Glycoside Hydrolase Family 13"/>
</dbReference>
<dbReference type="KEGG" id="fph:Fphi_0328"/>
<dbReference type="eggNOG" id="COG0296">
    <property type="taxonomic scope" value="Bacteria"/>
</dbReference>
<dbReference type="HOGENOM" id="CLU_004245_3_2_6"/>
<dbReference type="UniPathway" id="UPA00164"/>
<dbReference type="GO" id="GO:0005829">
    <property type="term" value="C:cytosol"/>
    <property type="evidence" value="ECO:0007669"/>
    <property type="project" value="TreeGrafter"/>
</dbReference>
<dbReference type="GO" id="GO:0003844">
    <property type="term" value="F:1,4-alpha-glucan branching enzyme activity"/>
    <property type="evidence" value="ECO:0007669"/>
    <property type="project" value="UniProtKB-UniRule"/>
</dbReference>
<dbReference type="GO" id="GO:0043169">
    <property type="term" value="F:cation binding"/>
    <property type="evidence" value="ECO:0007669"/>
    <property type="project" value="InterPro"/>
</dbReference>
<dbReference type="GO" id="GO:0004553">
    <property type="term" value="F:hydrolase activity, hydrolyzing O-glycosyl compounds"/>
    <property type="evidence" value="ECO:0007669"/>
    <property type="project" value="InterPro"/>
</dbReference>
<dbReference type="GO" id="GO:0005978">
    <property type="term" value="P:glycogen biosynthetic process"/>
    <property type="evidence" value="ECO:0007669"/>
    <property type="project" value="UniProtKB-UniRule"/>
</dbReference>
<dbReference type="CDD" id="cd11322">
    <property type="entry name" value="AmyAc_Glg_BE"/>
    <property type="match status" value="1"/>
</dbReference>
<dbReference type="CDD" id="cd02855">
    <property type="entry name" value="E_set_GBE_prok_N"/>
    <property type="match status" value="1"/>
</dbReference>
<dbReference type="FunFam" id="2.60.40.1180:FF:000002">
    <property type="entry name" value="1,4-alpha-glucan branching enzyme GlgB"/>
    <property type="match status" value="1"/>
</dbReference>
<dbReference type="FunFam" id="3.20.20.80:FF:000003">
    <property type="entry name" value="1,4-alpha-glucan branching enzyme GlgB"/>
    <property type="match status" value="1"/>
</dbReference>
<dbReference type="Gene3D" id="3.20.20.80">
    <property type="entry name" value="Glycosidases"/>
    <property type="match status" value="1"/>
</dbReference>
<dbReference type="Gene3D" id="2.60.40.1180">
    <property type="entry name" value="Golgi alpha-mannosidase II"/>
    <property type="match status" value="1"/>
</dbReference>
<dbReference type="Gene3D" id="2.60.40.10">
    <property type="entry name" value="Immunoglobulins"/>
    <property type="match status" value="1"/>
</dbReference>
<dbReference type="HAMAP" id="MF_00685">
    <property type="entry name" value="GlgB"/>
    <property type="match status" value="1"/>
</dbReference>
<dbReference type="InterPro" id="IPR006048">
    <property type="entry name" value="A-amylase/branching_C"/>
</dbReference>
<dbReference type="InterPro" id="IPR037439">
    <property type="entry name" value="Branching_enzy"/>
</dbReference>
<dbReference type="InterPro" id="IPR006407">
    <property type="entry name" value="GlgB"/>
</dbReference>
<dbReference type="InterPro" id="IPR044143">
    <property type="entry name" value="GlgB_N_E_set_prok"/>
</dbReference>
<dbReference type="InterPro" id="IPR006047">
    <property type="entry name" value="Glyco_hydro_13_cat_dom"/>
</dbReference>
<dbReference type="InterPro" id="IPR004193">
    <property type="entry name" value="Glyco_hydro_13_N"/>
</dbReference>
<dbReference type="InterPro" id="IPR013780">
    <property type="entry name" value="Glyco_hydro_b"/>
</dbReference>
<dbReference type="InterPro" id="IPR017853">
    <property type="entry name" value="Glycoside_hydrolase_SF"/>
</dbReference>
<dbReference type="InterPro" id="IPR013783">
    <property type="entry name" value="Ig-like_fold"/>
</dbReference>
<dbReference type="InterPro" id="IPR014756">
    <property type="entry name" value="Ig_E-set"/>
</dbReference>
<dbReference type="NCBIfam" id="TIGR01515">
    <property type="entry name" value="branching_enzym"/>
    <property type="match status" value="1"/>
</dbReference>
<dbReference type="NCBIfam" id="NF003811">
    <property type="entry name" value="PRK05402.1"/>
    <property type="match status" value="1"/>
</dbReference>
<dbReference type="NCBIfam" id="NF008967">
    <property type="entry name" value="PRK12313.1"/>
    <property type="match status" value="1"/>
</dbReference>
<dbReference type="PANTHER" id="PTHR43651">
    <property type="entry name" value="1,4-ALPHA-GLUCAN-BRANCHING ENZYME"/>
    <property type="match status" value="1"/>
</dbReference>
<dbReference type="PANTHER" id="PTHR43651:SF3">
    <property type="entry name" value="1,4-ALPHA-GLUCAN-BRANCHING ENZYME"/>
    <property type="match status" value="1"/>
</dbReference>
<dbReference type="Pfam" id="PF00128">
    <property type="entry name" value="Alpha-amylase"/>
    <property type="match status" value="2"/>
</dbReference>
<dbReference type="Pfam" id="PF02806">
    <property type="entry name" value="Alpha-amylase_C"/>
    <property type="match status" value="1"/>
</dbReference>
<dbReference type="Pfam" id="PF02922">
    <property type="entry name" value="CBM_48"/>
    <property type="match status" value="1"/>
</dbReference>
<dbReference type="PIRSF" id="PIRSF000463">
    <property type="entry name" value="GlgB"/>
    <property type="match status" value="1"/>
</dbReference>
<dbReference type="SMART" id="SM00642">
    <property type="entry name" value="Aamy"/>
    <property type="match status" value="1"/>
</dbReference>
<dbReference type="SUPFAM" id="SSF51445">
    <property type="entry name" value="(Trans)glycosidases"/>
    <property type="match status" value="1"/>
</dbReference>
<dbReference type="SUPFAM" id="SSF81296">
    <property type="entry name" value="E set domains"/>
    <property type="match status" value="1"/>
</dbReference>
<dbReference type="SUPFAM" id="SSF51011">
    <property type="entry name" value="Glycosyl hydrolase domain"/>
    <property type="match status" value="1"/>
</dbReference>
<sequence>MKNVNSKQNNHSTIGEQDIHFFHEGKHIYAYEFMGAHKASEDGIDGIRFTTWAPNAKSICVIGDFNHWQVEDKNHMKRITDAGLWSVFIADVKDGDKYKFVVTNKDTNHYVYKSDPYAFFSELRPNTASVISTQTTYKWHDEKWLKKRATADYYNSPMNTYELHLASWKTKDDRFMTYEEIAEVLPKYVKDMGYTHVEFMPLHEHPLDASWGYQPTGFYSINSRHGDLVGLKHLVDKLHTHDIGVILDWVPGHFCKDQHGLINFDGSACYEYQEPTKAINKGWGTHNFDLGRNEVKCFLISNAMYWINEFHIDGLRVDAVSNILYLNYDREDGQWVPNIHGGHENLEGIAFLRELNGVLKHTCKGVITIAEESSSWPNISTPVEQGGLGFDFKWNMGWMNDTLRYISLDPVYRKYHHNLITFSMVYHYSEKFILSISHDEVVHGKKSLINKMWGDLWNKYAGLRLYMSFMIGHPGKKLIFMGSEFGQFIEWREYEQLQWQVVDEYHTHRETLNFFKKLNEFYKAETALWECDYDHKGFQWIDANNSEQSILSFVRSNKDGKEKLIFVCNFTPVTYYDYHIGVPDAGSYIEAFNSDDLEFGGSGQLIADEIFSTPESSHGFDQRITIKVPPMATLVLKLKK</sequence>
<reference key="1">
    <citation type="submission" date="2007-12" db="EMBL/GenBank/DDBJ databases">
        <title>Complete sequence of chromosome of Francisella philomiragia subsp. philomiragia ATCC 25017.</title>
        <authorList>
            <consortium name="US DOE Joint Genome Institute"/>
            <person name="Copeland A."/>
            <person name="Lucas S."/>
            <person name="Lapidus A."/>
            <person name="Barry K."/>
            <person name="Detter J.C."/>
            <person name="Glavina del Rio T."/>
            <person name="Hammon N."/>
            <person name="Israni S."/>
            <person name="Dalin E."/>
            <person name="Tice H."/>
            <person name="Pitluck S."/>
            <person name="Chain P."/>
            <person name="Malfatti S."/>
            <person name="Shin M."/>
            <person name="Vergez L."/>
            <person name="Schmutz J."/>
            <person name="Larimer F."/>
            <person name="Land M."/>
            <person name="Hauser L."/>
            <person name="Richardson P."/>
        </authorList>
    </citation>
    <scope>NUCLEOTIDE SEQUENCE [LARGE SCALE GENOMIC DNA]</scope>
    <source>
        <strain>ATCC 25017 / CCUG 19701 / FSC 153 / O#319-036</strain>
    </source>
</reference>
<accession>B0TZI5</accession>
<organism>
    <name type="scientific">Francisella philomiragia subsp. philomiragia (strain ATCC 25017 / CCUG 19701 / FSC 153 / O#319-036)</name>
    <dbReference type="NCBI Taxonomy" id="484022"/>
    <lineage>
        <taxon>Bacteria</taxon>
        <taxon>Pseudomonadati</taxon>
        <taxon>Pseudomonadota</taxon>
        <taxon>Gammaproteobacteria</taxon>
        <taxon>Thiotrichales</taxon>
        <taxon>Francisellaceae</taxon>
        <taxon>Francisella</taxon>
    </lineage>
</organism>
<feature type="chain" id="PRO_1000083067" description="1,4-alpha-glucan branching enzyme GlgB">
    <location>
        <begin position="1"/>
        <end position="640"/>
    </location>
</feature>
<feature type="active site" description="Nucleophile" evidence="1">
    <location>
        <position position="318"/>
    </location>
</feature>
<feature type="active site" description="Proton donor" evidence="1">
    <location>
        <position position="371"/>
    </location>
</feature>
<name>GLGB_FRAP2</name>
<keyword id="KW-0119">Carbohydrate metabolism</keyword>
<keyword id="KW-0320">Glycogen biosynthesis</keyword>
<keyword id="KW-0321">Glycogen metabolism</keyword>
<keyword id="KW-0328">Glycosyltransferase</keyword>
<keyword id="KW-0808">Transferase</keyword>